<feature type="chain" id="PRO_1000022199" description="Glycine cleavage system H protein">
    <location>
        <begin position="1"/>
        <end position="130"/>
    </location>
</feature>
<feature type="domain" description="Lipoyl-binding" evidence="2">
    <location>
        <begin position="24"/>
        <end position="106"/>
    </location>
</feature>
<feature type="modified residue" description="N6-lipoyllysine" evidence="1">
    <location>
        <position position="65"/>
    </location>
</feature>
<proteinExistence type="inferred from homology"/>
<comment type="function">
    <text evidence="1">The glycine cleavage system catalyzes the degradation of glycine. The H protein shuttles the methylamine group of glycine from the P protein to the T protein.</text>
</comment>
<comment type="cofactor">
    <cofactor evidence="1">
        <name>(R)-lipoate</name>
        <dbReference type="ChEBI" id="CHEBI:83088"/>
    </cofactor>
    <text evidence="1">Binds 1 lipoyl cofactor covalently.</text>
</comment>
<comment type="subunit">
    <text evidence="1">The glycine cleavage system is composed of four proteins: P, T, L and H.</text>
</comment>
<comment type="similarity">
    <text evidence="1">Belongs to the GcvH family.</text>
</comment>
<dbReference type="EMBL" id="CP000282">
    <property type="protein sequence ID" value="ABD79603.1"/>
    <property type="molecule type" value="Genomic_DNA"/>
</dbReference>
<dbReference type="RefSeq" id="WP_011466827.1">
    <property type="nucleotide sequence ID" value="NC_007912.1"/>
</dbReference>
<dbReference type="SMR" id="Q21NX6"/>
<dbReference type="STRING" id="203122.Sde_0339"/>
<dbReference type="GeneID" id="98612041"/>
<dbReference type="KEGG" id="sde:Sde_0339"/>
<dbReference type="eggNOG" id="COG0509">
    <property type="taxonomic scope" value="Bacteria"/>
</dbReference>
<dbReference type="HOGENOM" id="CLU_097408_2_1_6"/>
<dbReference type="OrthoDB" id="9796712at2"/>
<dbReference type="Proteomes" id="UP000001947">
    <property type="component" value="Chromosome"/>
</dbReference>
<dbReference type="GO" id="GO:0005829">
    <property type="term" value="C:cytosol"/>
    <property type="evidence" value="ECO:0007669"/>
    <property type="project" value="TreeGrafter"/>
</dbReference>
<dbReference type="GO" id="GO:0005960">
    <property type="term" value="C:glycine cleavage complex"/>
    <property type="evidence" value="ECO:0007669"/>
    <property type="project" value="InterPro"/>
</dbReference>
<dbReference type="GO" id="GO:0019464">
    <property type="term" value="P:glycine decarboxylation via glycine cleavage system"/>
    <property type="evidence" value="ECO:0007669"/>
    <property type="project" value="UniProtKB-UniRule"/>
</dbReference>
<dbReference type="CDD" id="cd06848">
    <property type="entry name" value="GCS_H"/>
    <property type="match status" value="1"/>
</dbReference>
<dbReference type="Gene3D" id="2.40.50.100">
    <property type="match status" value="1"/>
</dbReference>
<dbReference type="HAMAP" id="MF_00272">
    <property type="entry name" value="GcvH"/>
    <property type="match status" value="1"/>
</dbReference>
<dbReference type="InterPro" id="IPR003016">
    <property type="entry name" value="2-oxoA_DH_lipoyl-BS"/>
</dbReference>
<dbReference type="InterPro" id="IPR000089">
    <property type="entry name" value="Biotin_lipoyl"/>
</dbReference>
<dbReference type="InterPro" id="IPR002930">
    <property type="entry name" value="GCV_H"/>
</dbReference>
<dbReference type="InterPro" id="IPR033753">
    <property type="entry name" value="GCV_H/Fam206"/>
</dbReference>
<dbReference type="InterPro" id="IPR017453">
    <property type="entry name" value="GCV_H_sub"/>
</dbReference>
<dbReference type="InterPro" id="IPR011053">
    <property type="entry name" value="Single_hybrid_motif"/>
</dbReference>
<dbReference type="NCBIfam" id="TIGR00527">
    <property type="entry name" value="gcvH"/>
    <property type="match status" value="1"/>
</dbReference>
<dbReference type="NCBIfam" id="NF002270">
    <property type="entry name" value="PRK01202.1"/>
    <property type="match status" value="1"/>
</dbReference>
<dbReference type="PANTHER" id="PTHR11715">
    <property type="entry name" value="GLYCINE CLEAVAGE SYSTEM H PROTEIN"/>
    <property type="match status" value="1"/>
</dbReference>
<dbReference type="PANTHER" id="PTHR11715:SF3">
    <property type="entry name" value="GLYCINE CLEAVAGE SYSTEM H PROTEIN-RELATED"/>
    <property type="match status" value="1"/>
</dbReference>
<dbReference type="Pfam" id="PF01597">
    <property type="entry name" value="GCV_H"/>
    <property type="match status" value="1"/>
</dbReference>
<dbReference type="SUPFAM" id="SSF51230">
    <property type="entry name" value="Single hybrid motif"/>
    <property type="match status" value="1"/>
</dbReference>
<dbReference type="PROSITE" id="PS50968">
    <property type="entry name" value="BIOTINYL_LIPOYL"/>
    <property type="match status" value="1"/>
</dbReference>
<dbReference type="PROSITE" id="PS00189">
    <property type="entry name" value="LIPOYL"/>
    <property type="match status" value="1"/>
</dbReference>
<keyword id="KW-0450">Lipoyl</keyword>
<keyword id="KW-1185">Reference proteome</keyword>
<name>GCSH_SACD2</name>
<sequence>MSELRSELKYLESHEWARVEEDGTVTIGITDHAQEALGDVVFVEVPEVGSQVSIGEEAGVVESVKAASDIYSPVSGEVIAVNEALEDAPETVNSSPYDDGWFFKVKPDDLDELEKALSMEDYKAAIESDD</sequence>
<accession>Q21NX6</accession>
<reference key="1">
    <citation type="journal article" date="2008" name="PLoS Genet.">
        <title>Complete genome sequence of the complex carbohydrate-degrading marine bacterium, Saccharophagus degradans strain 2-40 T.</title>
        <authorList>
            <person name="Weiner R.M."/>
            <person name="Taylor L.E. II"/>
            <person name="Henrissat B."/>
            <person name="Hauser L."/>
            <person name="Land M."/>
            <person name="Coutinho P.M."/>
            <person name="Rancurel C."/>
            <person name="Saunders E.H."/>
            <person name="Longmire A.G."/>
            <person name="Zhang H."/>
            <person name="Bayer E.A."/>
            <person name="Gilbert H.J."/>
            <person name="Larimer F."/>
            <person name="Zhulin I.B."/>
            <person name="Ekborg N.A."/>
            <person name="Lamed R."/>
            <person name="Richardson P.M."/>
            <person name="Borovok I."/>
            <person name="Hutcheson S."/>
        </authorList>
    </citation>
    <scope>NUCLEOTIDE SEQUENCE [LARGE SCALE GENOMIC DNA]</scope>
    <source>
        <strain>2-40 / ATCC 43961 / DSM 17024</strain>
    </source>
</reference>
<evidence type="ECO:0000255" key="1">
    <source>
        <dbReference type="HAMAP-Rule" id="MF_00272"/>
    </source>
</evidence>
<evidence type="ECO:0000255" key="2">
    <source>
        <dbReference type="PROSITE-ProRule" id="PRU01066"/>
    </source>
</evidence>
<organism>
    <name type="scientific">Saccharophagus degradans (strain 2-40 / ATCC 43961 / DSM 17024)</name>
    <dbReference type="NCBI Taxonomy" id="203122"/>
    <lineage>
        <taxon>Bacteria</taxon>
        <taxon>Pseudomonadati</taxon>
        <taxon>Pseudomonadota</taxon>
        <taxon>Gammaproteobacteria</taxon>
        <taxon>Cellvibrionales</taxon>
        <taxon>Cellvibrionaceae</taxon>
        <taxon>Saccharophagus</taxon>
    </lineage>
</organism>
<gene>
    <name evidence="1" type="primary">gcvH</name>
    <name type="ordered locus">Sde_0339</name>
</gene>
<protein>
    <recommendedName>
        <fullName evidence="1">Glycine cleavage system H protein</fullName>
    </recommendedName>
</protein>